<gene>
    <name type="primary">ewg</name>
    <name type="ORF">CG3114</name>
</gene>
<feature type="chain" id="PRO_0000100213" description="DNA-binding protein Ewg">
    <location>
        <begin position="1"/>
        <end position="733"/>
    </location>
</feature>
<feature type="DNA-binding region" evidence="1">
    <location>
        <begin position="167"/>
        <end position="379"/>
    </location>
</feature>
<feature type="region of interest" description="Disordered" evidence="3">
    <location>
        <begin position="13"/>
        <end position="51"/>
    </location>
</feature>
<feature type="region of interest" description="Dimerization" evidence="1">
    <location>
        <begin position="69"/>
        <end position="136"/>
    </location>
</feature>
<feature type="region of interest" description="Required for transcriptional activation" evidence="1">
    <location>
        <begin position="375"/>
        <end position="663"/>
    </location>
</feature>
<feature type="short sequence motif" description="Nuclear localization signal" evidence="1">
    <location>
        <begin position="146"/>
        <end position="174"/>
    </location>
</feature>
<feature type="compositionally biased region" description="Low complexity" evidence="3">
    <location>
        <begin position="18"/>
        <end position="37"/>
    </location>
</feature>
<feature type="modified residue" description="Phosphoserine; by CK2" evidence="1">
    <location>
        <position position="97"/>
    </location>
</feature>
<feature type="modified residue" description="Phosphoserine; by CK2" evidence="1">
    <location>
        <position position="110"/>
    </location>
</feature>
<feature type="splice variant" id="VSP_026515" description="In isoform F and isoform G." evidence="8">
    <location>
        <begin position="387"/>
        <end position="540"/>
    </location>
</feature>
<feature type="splice variant" id="VSP_026516" description="In isoform H." evidence="8">
    <original>QPQQVNVVKINSAGTVITTHTAQSNTPAPTIIQSTNNQHVT</original>
    <variation>LIVIELLVISIIICIRHKLKKHTHITPRKRSSHRTPMVPYR</variation>
    <location>
        <begin position="387"/>
        <end position="427"/>
    </location>
</feature>
<feature type="splice variant" id="VSP_026517" description="In isoform H." evidence="8">
    <location>
        <begin position="428"/>
        <end position="733"/>
    </location>
</feature>
<feature type="splice variant" id="VSP_026518" description="In isoform D." evidence="8">
    <original>YTTQTVLSQNADGTVSLIQVDPNNPIITLPDGTTAQVQGVA</original>
    <variation>LIVIELLVISIIICIRHKLKKHTHITPRKRSSHRTPMVPYR</variation>
    <location>
        <begin position="541"/>
        <end position="581"/>
    </location>
</feature>
<feature type="splice variant" id="VSP_026519" description="In isoform D." evidence="8">
    <location>
        <begin position="582"/>
        <end position="733"/>
    </location>
</feature>
<feature type="splice variant" id="VSP_026520" description="In isoform E and isoform G." evidence="8">
    <original>VENGDQLETITMSPGMHQMMIQGGPGQEPQLVQVVSLKDATLLSKAMEAINSGNVKSEDTIIMEQ</original>
    <variation>IGKLENFRGPLDLWRMATSWRPSPCRLECTR</variation>
    <location>
        <begin position="669"/>
        <end position="733"/>
    </location>
</feature>
<feature type="splice variant" id="VSP_003603" description="In isoform B." evidence="6">
    <original>ENGDQLETITMSPGMHQMMIQGGPGQEPQLVQVVSLKDATLLSKAMEAINSGNVKSEDTIIMEQ</original>
    <variation>DTSINRSTSTAASSSSSLGNGGVQCYSLISAGSSVLSRRSGGVIGHQVTPGERYYLATTTSSSLGLNNNNNCTLANNNNSVKMPIVLATPSIPQVANKRSTGKRSTGVSGGDDVMVQKRGRPNSSSRSKSQLNANENAHSSGTSSSIRCVDSASLTNVQLQLPAIKLEHLG</variation>
    <location>
        <begin position="670"/>
        <end position="733"/>
    </location>
</feature>
<feature type="sequence conflict" description="In Ref. 1; AAA28478 and 2; AAD34460." evidence="8" ref="1 2">
    <original>KL</original>
    <variation>NV</variation>
    <location>
        <begin position="172"/>
        <end position="173"/>
    </location>
</feature>
<feature type="sequence conflict" description="In Ref. 6; AAL90347." evidence="8" ref="6">
    <original>V</original>
    <variation>A</variation>
    <location sequence="Q24312-4">
        <position position="777"/>
    </location>
</feature>
<name>EWG_DROME</name>
<reference evidence="8" key="1">
    <citation type="journal article" date="1993" name="Mol. Cell. Biol.">
        <title>The Drosophila erect wing gene, which is important for both neuronal and muscle development, encodes a protein which is similar to the sea urchin P3A2 DNA binding protein.</title>
        <authorList>
            <person name="DeSimone S.M."/>
            <person name="White K."/>
        </authorList>
    </citation>
    <scope>NUCLEOTIDE SEQUENCE [MRNA] (ISOFORM A)</scope>
    <scope>FUNCTION</scope>
    <scope>SUBCELLULAR LOCATION</scope>
    <scope>TISSUE SPECIFICITY</scope>
    <scope>DEVELOPMENTAL STAGE</scope>
    <source>
        <strain>Canton-S</strain>
        <tissue>Head</tissue>
    </source>
</reference>
<reference evidence="8" key="2">
    <citation type="journal article" date="1999" name="Mol. Cell. Biol.">
        <title>Differential and inefficient splicing of a broadly expressed Drosophila erect wing transcript results in tissue-specific enrichment of the vital EWG protein isoform.</title>
        <authorList>
            <person name="Koushika S.P."/>
            <person name="Soller M."/>
            <person name="DeSimone S.M."/>
            <person name="Daub D.M."/>
            <person name="White K."/>
        </authorList>
    </citation>
    <scope>NUCLEOTIDE SEQUENCE [GENOMIC DNA]</scope>
    <scope>ALTERNATIVE SPLICING</scope>
    <scope>TISSUE SPECIFICITY</scope>
    <source>
        <tissue>Head</tissue>
    </source>
</reference>
<reference evidence="8" key="3">
    <citation type="journal article" date="2000" name="Science">
        <title>The genome sequence of Drosophila melanogaster.</title>
        <authorList>
            <person name="Adams M.D."/>
            <person name="Celniker S.E."/>
            <person name="Holt R.A."/>
            <person name="Evans C.A."/>
            <person name="Gocayne J.D."/>
            <person name="Amanatides P.G."/>
            <person name="Scherer S.E."/>
            <person name="Li P.W."/>
            <person name="Hoskins R.A."/>
            <person name="Galle R.F."/>
            <person name="George R.A."/>
            <person name="Lewis S.E."/>
            <person name="Richards S."/>
            <person name="Ashburner M."/>
            <person name="Henderson S.N."/>
            <person name="Sutton G.G."/>
            <person name="Wortman J.R."/>
            <person name="Yandell M.D."/>
            <person name="Zhang Q."/>
            <person name="Chen L.X."/>
            <person name="Brandon R.C."/>
            <person name="Rogers Y.-H.C."/>
            <person name="Blazej R.G."/>
            <person name="Champe M."/>
            <person name="Pfeiffer B.D."/>
            <person name="Wan K.H."/>
            <person name="Doyle C."/>
            <person name="Baxter E.G."/>
            <person name="Helt G."/>
            <person name="Nelson C.R."/>
            <person name="Miklos G.L.G."/>
            <person name="Abril J.F."/>
            <person name="Agbayani A."/>
            <person name="An H.-J."/>
            <person name="Andrews-Pfannkoch C."/>
            <person name="Baldwin D."/>
            <person name="Ballew R.M."/>
            <person name="Basu A."/>
            <person name="Baxendale J."/>
            <person name="Bayraktaroglu L."/>
            <person name="Beasley E.M."/>
            <person name="Beeson K.Y."/>
            <person name="Benos P.V."/>
            <person name="Berman B.P."/>
            <person name="Bhandari D."/>
            <person name="Bolshakov S."/>
            <person name="Borkova D."/>
            <person name="Botchan M.R."/>
            <person name="Bouck J."/>
            <person name="Brokstein P."/>
            <person name="Brottier P."/>
            <person name="Burtis K.C."/>
            <person name="Busam D.A."/>
            <person name="Butler H."/>
            <person name="Cadieu E."/>
            <person name="Center A."/>
            <person name="Chandra I."/>
            <person name="Cherry J.M."/>
            <person name="Cawley S."/>
            <person name="Dahlke C."/>
            <person name="Davenport L.B."/>
            <person name="Davies P."/>
            <person name="de Pablos B."/>
            <person name="Delcher A."/>
            <person name="Deng Z."/>
            <person name="Mays A.D."/>
            <person name="Dew I."/>
            <person name="Dietz S.M."/>
            <person name="Dodson K."/>
            <person name="Doup L.E."/>
            <person name="Downes M."/>
            <person name="Dugan-Rocha S."/>
            <person name="Dunkov B.C."/>
            <person name="Dunn P."/>
            <person name="Durbin K.J."/>
            <person name="Evangelista C.C."/>
            <person name="Ferraz C."/>
            <person name="Ferriera S."/>
            <person name="Fleischmann W."/>
            <person name="Fosler C."/>
            <person name="Gabrielian A.E."/>
            <person name="Garg N.S."/>
            <person name="Gelbart W.M."/>
            <person name="Glasser K."/>
            <person name="Glodek A."/>
            <person name="Gong F."/>
            <person name="Gorrell J.H."/>
            <person name="Gu Z."/>
            <person name="Guan P."/>
            <person name="Harris M."/>
            <person name="Harris N.L."/>
            <person name="Harvey D.A."/>
            <person name="Heiman T.J."/>
            <person name="Hernandez J.R."/>
            <person name="Houck J."/>
            <person name="Hostin D."/>
            <person name="Houston K.A."/>
            <person name="Howland T.J."/>
            <person name="Wei M.-H."/>
            <person name="Ibegwam C."/>
            <person name="Jalali M."/>
            <person name="Kalush F."/>
            <person name="Karpen G.H."/>
            <person name="Ke Z."/>
            <person name="Kennison J.A."/>
            <person name="Ketchum K.A."/>
            <person name="Kimmel B.E."/>
            <person name="Kodira C.D."/>
            <person name="Kraft C.L."/>
            <person name="Kravitz S."/>
            <person name="Kulp D."/>
            <person name="Lai Z."/>
            <person name="Lasko P."/>
            <person name="Lei Y."/>
            <person name="Levitsky A.A."/>
            <person name="Li J.H."/>
            <person name="Li Z."/>
            <person name="Liang Y."/>
            <person name="Lin X."/>
            <person name="Liu X."/>
            <person name="Mattei B."/>
            <person name="McIntosh T.C."/>
            <person name="McLeod M.P."/>
            <person name="McPherson D."/>
            <person name="Merkulov G."/>
            <person name="Milshina N.V."/>
            <person name="Mobarry C."/>
            <person name="Morris J."/>
            <person name="Moshrefi A."/>
            <person name="Mount S.M."/>
            <person name="Moy M."/>
            <person name="Murphy B."/>
            <person name="Murphy L."/>
            <person name="Muzny D.M."/>
            <person name="Nelson D.L."/>
            <person name="Nelson D.R."/>
            <person name="Nelson K.A."/>
            <person name="Nixon K."/>
            <person name="Nusskern D.R."/>
            <person name="Pacleb J.M."/>
            <person name="Palazzolo M."/>
            <person name="Pittman G.S."/>
            <person name="Pan S."/>
            <person name="Pollard J."/>
            <person name="Puri V."/>
            <person name="Reese M.G."/>
            <person name="Reinert K."/>
            <person name="Remington K."/>
            <person name="Saunders R.D.C."/>
            <person name="Scheeler F."/>
            <person name="Shen H."/>
            <person name="Shue B.C."/>
            <person name="Siden-Kiamos I."/>
            <person name="Simpson M."/>
            <person name="Skupski M.P."/>
            <person name="Smith T.J."/>
            <person name="Spier E."/>
            <person name="Spradling A.C."/>
            <person name="Stapleton M."/>
            <person name="Strong R."/>
            <person name="Sun E."/>
            <person name="Svirskas R."/>
            <person name="Tector C."/>
            <person name="Turner R."/>
            <person name="Venter E."/>
            <person name="Wang A.H."/>
            <person name="Wang X."/>
            <person name="Wang Z.-Y."/>
            <person name="Wassarman D.A."/>
            <person name="Weinstock G.M."/>
            <person name="Weissenbach J."/>
            <person name="Williams S.M."/>
            <person name="Woodage T."/>
            <person name="Worley K.C."/>
            <person name="Wu D."/>
            <person name="Yang S."/>
            <person name="Yao Q.A."/>
            <person name="Ye J."/>
            <person name="Yeh R.-F."/>
            <person name="Zaveri J.S."/>
            <person name="Zhan M."/>
            <person name="Zhang G."/>
            <person name="Zhao Q."/>
            <person name="Zheng L."/>
            <person name="Zheng X.H."/>
            <person name="Zhong F.N."/>
            <person name="Zhong W."/>
            <person name="Zhou X."/>
            <person name="Zhu S.C."/>
            <person name="Zhu X."/>
            <person name="Smith H.O."/>
            <person name="Gibbs R.A."/>
            <person name="Myers E.W."/>
            <person name="Rubin G.M."/>
            <person name="Venter J.C."/>
        </authorList>
    </citation>
    <scope>NUCLEOTIDE SEQUENCE [LARGE SCALE GENOMIC DNA]</scope>
    <source>
        <strain>Berkeley</strain>
    </source>
</reference>
<reference key="4">
    <citation type="journal article" date="2002" name="Genome Biol.">
        <title>Annotation of the Drosophila melanogaster euchromatic genome: a systematic review.</title>
        <authorList>
            <person name="Misra S."/>
            <person name="Crosby M.A."/>
            <person name="Mungall C.J."/>
            <person name="Matthews B.B."/>
            <person name="Campbell K.S."/>
            <person name="Hradecky P."/>
            <person name="Huang Y."/>
            <person name="Kaminker J.S."/>
            <person name="Millburn G.H."/>
            <person name="Prochnik S.E."/>
            <person name="Smith C.D."/>
            <person name="Tupy J.L."/>
            <person name="Whitfield E.J."/>
            <person name="Bayraktaroglu L."/>
            <person name="Berman B.P."/>
            <person name="Bettencourt B.R."/>
            <person name="Celniker S.E."/>
            <person name="de Grey A.D.N.J."/>
            <person name="Drysdale R.A."/>
            <person name="Harris N.L."/>
            <person name="Richter J."/>
            <person name="Russo S."/>
            <person name="Schroeder A.J."/>
            <person name="Shu S.Q."/>
            <person name="Stapleton M."/>
            <person name="Yamada C."/>
            <person name="Ashburner M."/>
            <person name="Gelbart W.M."/>
            <person name="Rubin G.M."/>
            <person name="Lewis S.E."/>
        </authorList>
    </citation>
    <scope>GENOME REANNOTATION</scope>
    <scope>ALTERNATIVE SPLICING</scope>
    <source>
        <strain>Berkeley</strain>
    </source>
</reference>
<reference evidence="8" key="5">
    <citation type="journal article" date="2000" name="Science">
        <title>From sequence to chromosome: the tip of the X chromosome of D. melanogaster.</title>
        <authorList>
            <person name="Benos P.V."/>
            <person name="Gatt M.K."/>
            <person name="Ashburner M."/>
            <person name="Murphy L."/>
            <person name="Harris D."/>
            <person name="Barrell B.G."/>
            <person name="Ferraz C."/>
            <person name="Vidal S."/>
            <person name="Brun C."/>
            <person name="Demailles J."/>
            <person name="Cadieu E."/>
            <person name="Dreano S."/>
            <person name="Gloux S."/>
            <person name="Lelaure V."/>
            <person name="Mottier S."/>
            <person name="Galibert F."/>
            <person name="Borkova D."/>
            <person name="Minana B."/>
            <person name="Kafatos F.C."/>
            <person name="Louis C."/>
            <person name="Siden-Kiamos I."/>
            <person name="Bolshakov S."/>
            <person name="Papagiannakis G."/>
            <person name="Spanos L."/>
            <person name="Cox S."/>
            <person name="Madueno E."/>
            <person name="de Pablos B."/>
            <person name="Modolell J."/>
            <person name="Peter A."/>
            <person name="Schoettler P."/>
            <person name="Werner M."/>
            <person name="Mourkioti F."/>
            <person name="Beinert N."/>
            <person name="Dowe G."/>
            <person name="Schaefer U."/>
            <person name="Jaeckle H."/>
            <person name="Bucheton A."/>
            <person name="Callister D.M."/>
            <person name="Campbell L.A."/>
            <person name="Darlamitsou A."/>
            <person name="Henderson N.S."/>
            <person name="McMillan P.J."/>
            <person name="Salles C."/>
            <person name="Tait E.A."/>
            <person name="Valenti P."/>
            <person name="Saunders R.D.C."/>
            <person name="Glover D.M."/>
        </authorList>
    </citation>
    <scope>NUCLEOTIDE SEQUENCE [LARGE SCALE GENOMIC DNA]</scope>
    <source>
        <strain>Oregon-R</strain>
    </source>
</reference>
<reference key="6">
    <citation type="journal article" date="2002" name="Genome Biol.">
        <title>A Drosophila full-length cDNA resource.</title>
        <authorList>
            <person name="Stapleton M."/>
            <person name="Carlson J.W."/>
            <person name="Brokstein P."/>
            <person name="Yu C."/>
            <person name="Champe M."/>
            <person name="George R.A."/>
            <person name="Guarin H."/>
            <person name="Kronmiller B."/>
            <person name="Pacleb J.M."/>
            <person name="Park S."/>
            <person name="Wan K.H."/>
            <person name="Rubin G.M."/>
            <person name="Celniker S.E."/>
        </authorList>
    </citation>
    <scope>NUCLEOTIDE SEQUENCE [LARGE SCALE MRNA] (ISOFORM B)</scope>
    <source>
        <strain>Berkeley</strain>
        <tissue>Embryo</tissue>
    </source>
</reference>
<comment type="function">
    <text evidence="5 7">May function as a positive regulator of transcription in developing and differentiated neurons, regulating common aspects of neuronal differentiation and maintenance. Requirement in the CNS may be higher than in the peripheral system. Vital for development of the indirect flight muscles.</text>
</comment>
<comment type="subunit">
    <text evidence="2">Homodimer. Binds DNA as a dimer (By similarity).</text>
</comment>
<comment type="subcellular location">
    <subcellularLocation>
        <location evidence="5">Nucleus</location>
    </subcellularLocation>
    <text>Not in nucleolus.</text>
</comment>
<comment type="alternative products">
    <event type="alternative splicing"/>
    <isoform>
        <id>Q24312-1</id>
        <name>A</name>
        <name>C</name>
        <sequence type="displayed"/>
    </isoform>
    <isoform>
        <id>Q24312-4</id>
        <name>B</name>
        <sequence type="described" ref="VSP_003603"/>
    </isoform>
    <isoform>
        <id>Q24312-5</id>
        <name>D</name>
        <sequence type="described" ref="VSP_026518 VSP_026519"/>
    </isoform>
    <isoform>
        <id>Q24312-6</id>
        <name>E</name>
        <sequence type="described" ref="VSP_026520"/>
    </isoform>
    <isoform>
        <id>Q24312-7</id>
        <name>F</name>
        <sequence type="described" ref="VSP_026515"/>
    </isoform>
    <isoform>
        <id>Q24312-8</id>
        <name>G</name>
        <sequence type="described" ref="VSP_026515 VSP_026520"/>
    </isoform>
    <isoform>
        <id>Q24312-9</id>
        <name>H</name>
        <sequence type="described" ref="VSP_026516 VSP_026517"/>
    </isoform>
    <text>Additional isoforms seem to exist.</text>
</comment>
<comment type="tissue specificity">
    <text evidence="4 5">Isoform A is highly expressed in possibly all embryonic neurons and is enriched in adult heads. Other isoforms show similar expression at a much lower level. Transient expression in migrating myoblasts.</text>
</comment>
<comment type="developmental stage">
    <text evidence="5">Expressed throughout development, beginning at embryonic stage 12 when levels steadily increase and then drop dramatically at third-instar larvae. Levels increase in 24 hour pupae and remain until adulthood.</text>
</comment>
<comment type="similarity">
    <text evidence="8">Belongs to the NRF1/Ewg family.</text>
</comment>
<comment type="sequence caution" evidence="8">
    <conflict type="miscellaneous discrepancy">
        <sequence resource="EMBL-CDS" id="AAL90347"/>
    </conflict>
    <text>Unusual initiator. The initiator methionine is coded by a non-canonical CTG leucine codon.</text>
</comment>
<comment type="sequence caution" evidence="8">
    <conflict type="erroneous gene model prediction">
        <sequence resource="EMBL-CDS" id="CAB43325"/>
    </conflict>
</comment>
<protein>
    <recommendedName>
        <fullName>DNA-binding protein Ewg</fullName>
    </recommendedName>
    <alternativeName>
        <fullName>Protein erect wing</fullName>
    </alternativeName>
</protein>
<proteinExistence type="evidence at transcript level"/>
<dbReference type="EMBL" id="L11345">
    <property type="protein sequence ID" value="AAA28478.1"/>
    <property type="molecule type" value="mRNA"/>
</dbReference>
<dbReference type="EMBL" id="AF135590">
    <property type="protein sequence ID" value="AAD34460.1"/>
    <property type="molecule type" value="Genomic_DNA"/>
</dbReference>
<dbReference type="EMBL" id="AE014298">
    <property type="protein sequence ID" value="AAF45491.5"/>
    <property type="molecule type" value="Genomic_DNA"/>
</dbReference>
<dbReference type="EMBL" id="AE014298">
    <property type="protein sequence ID" value="AAF45492.5"/>
    <property type="molecule type" value="Genomic_DNA"/>
</dbReference>
<dbReference type="EMBL" id="AE014298">
    <property type="protein sequence ID" value="AAX52466.1"/>
    <property type="molecule type" value="Genomic_DNA"/>
</dbReference>
<dbReference type="EMBL" id="AE014298">
    <property type="protein sequence ID" value="AAX52467.1"/>
    <property type="molecule type" value="Genomic_DNA"/>
</dbReference>
<dbReference type="EMBL" id="AE014298">
    <property type="protein sequence ID" value="AAX52468.1"/>
    <property type="molecule type" value="Genomic_DNA"/>
</dbReference>
<dbReference type="EMBL" id="AE014298">
    <property type="protein sequence ID" value="AAX52469.1"/>
    <property type="molecule type" value="Genomic_DNA"/>
</dbReference>
<dbReference type="EMBL" id="AE014298">
    <property type="protein sequence ID" value="AAX52470.1"/>
    <property type="molecule type" value="Genomic_DNA"/>
</dbReference>
<dbReference type="EMBL" id="AE014298">
    <property type="protein sequence ID" value="AAX52471.1"/>
    <property type="molecule type" value="Genomic_DNA"/>
</dbReference>
<dbReference type="EMBL" id="AL050231">
    <property type="protein sequence ID" value="CAB43325.1"/>
    <property type="status" value="ALT_SEQ"/>
    <property type="molecule type" value="Genomic_DNA"/>
</dbReference>
<dbReference type="EMBL" id="AY089609">
    <property type="protein sequence ID" value="AAL90347.1"/>
    <property type="status" value="ALT_SEQ"/>
    <property type="molecule type" value="mRNA"/>
</dbReference>
<dbReference type="PIR" id="A48128">
    <property type="entry name" value="A48128"/>
</dbReference>
<dbReference type="RefSeq" id="NP_001014707.1">
    <molecule id="Q24312-8"/>
    <property type="nucleotide sequence ID" value="NM_001014707.2"/>
</dbReference>
<dbReference type="RefSeq" id="NP_001014708.1">
    <molecule id="Q24312-7"/>
    <property type="nucleotide sequence ID" value="NM_001014708.2"/>
</dbReference>
<dbReference type="RefSeq" id="NP_001014709.1">
    <molecule id="Q24312-6"/>
    <property type="nucleotide sequence ID" value="NM_001014709.2"/>
</dbReference>
<dbReference type="RefSeq" id="NP_001014710.1">
    <molecule id="Q24312-5"/>
    <property type="nucleotide sequence ID" value="NM_001014710.2"/>
</dbReference>
<dbReference type="RefSeq" id="NP_001014711.1">
    <molecule id="Q24312-1"/>
    <property type="nucleotide sequence ID" value="NM_001014711.2"/>
</dbReference>
<dbReference type="RefSeq" id="NP_001014712.1">
    <molecule id="Q24312-9"/>
    <property type="nucleotide sequence ID" value="NM_001014712.2"/>
</dbReference>
<dbReference type="RefSeq" id="NP_476892.4">
    <molecule id="Q24312-4"/>
    <property type="nucleotide sequence ID" value="NM_057544.4"/>
</dbReference>
<dbReference type="RefSeq" id="NP_726660.3">
    <molecule id="Q24312-1"/>
    <property type="nucleotide sequence ID" value="NM_166836.2"/>
</dbReference>
<dbReference type="SMR" id="Q24312"/>
<dbReference type="BioGRID" id="57548">
    <property type="interactions" value="66"/>
</dbReference>
<dbReference type="FunCoup" id="Q24312">
    <property type="interactions" value="551"/>
</dbReference>
<dbReference type="IntAct" id="Q24312">
    <property type="interactions" value="5"/>
</dbReference>
<dbReference type="STRING" id="7227.FBpp0300529"/>
<dbReference type="PaxDb" id="7227-FBpp0300529"/>
<dbReference type="EnsemblMetazoa" id="FBtr0089441">
    <molecule id="Q24312-4"/>
    <property type="protein sequence ID" value="FBpp0088456"/>
    <property type="gene ID" value="FBgn0005427"/>
</dbReference>
<dbReference type="EnsemblMetazoa" id="FBtr0089442">
    <molecule id="Q24312-1"/>
    <property type="protein sequence ID" value="FBpp0088457"/>
    <property type="gene ID" value="FBgn0005427"/>
</dbReference>
<dbReference type="EnsemblMetazoa" id="FBtr0100577">
    <molecule id="Q24312-1"/>
    <property type="protein sequence ID" value="FBpp0100032"/>
    <property type="gene ID" value="FBgn0005427"/>
</dbReference>
<dbReference type="EnsemblMetazoa" id="FBtr0100578">
    <molecule id="Q24312-5"/>
    <property type="protein sequence ID" value="FBpp0100033"/>
    <property type="gene ID" value="FBgn0005427"/>
</dbReference>
<dbReference type="EnsemblMetazoa" id="FBtr0100579">
    <molecule id="Q24312-6"/>
    <property type="protein sequence ID" value="FBpp0100034"/>
    <property type="gene ID" value="FBgn0005427"/>
</dbReference>
<dbReference type="EnsemblMetazoa" id="FBtr0100580">
    <molecule id="Q24312-7"/>
    <property type="protein sequence ID" value="FBpp0100035"/>
    <property type="gene ID" value="FBgn0005427"/>
</dbReference>
<dbReference type="EnsemblMetazoa" id="FBtr0100581">
    <molecule id="Q24312-8"/>
    <property type="protein sequence ID" value="FBpp0100036"/>
    <property type="gene ID" value="FBgn0005427"/>
</dbReference>
<dbReference type="EnsemblMetazoa" id="FBtr0100582">
    <molecule id="Q24312-9"/>
    <property type="protein sequence ID" value="FBpp0100037"/>
    <property type="gene ID" value="FBgn0005427"/>
</dbReference>
<dbReference type="GeneID" id="30975"/>
<dbReference type="KEGG" id="dme:Dmel_CG3114"/>
<dbReference type="AGR" id="FB:FBgn0005427"/>
<dbReference type="CTD" id="30975"/>
<dbReference type="FlyBase" id="FBgn0005427">
    <property type="gene designation" value="ewg"/>
</dbReference>
<dbReference type="VEuPathDB" id="VectorBase:FBgn0005427"/>
<dbReference type="eggNOG" id="ENOG502QTK1">
    <property type="taxonomic scope" value="Eukaryota"/>
</dbReference>
<dbReference type="GeneTree" id="ENSGT00390000006835"/>
<dbReference type="HOGENOM" id="CLU_018156_2_0_1"/>
<dbReference type="InParanoid" id="Q24312"/>
<dbReference type="OMA" id="EVEPSWA"/>
<dbReference type="OrthoDB" id="10031051at2759"/>
<dbReference type="SignaLink" id="Q24312"/>
<dbReference type="BioGRID-ORCS" id="30975">
    <property type="hits" value="0 hits in 1 CRISPR screen"/>
</dbReference>
<dbReference type="ChiTaRS" id="ewg">
    <property type="organism name" value="fly"/>
</dbReference>
<dbReference type="GenomeRNAi" id="30975"/>
<dbReference type="PRO" id="PR:Q24312"/>
<dbReference type="Proteomes" id="UP000000803">
    <property type="component" value="Chromosome X"/>
</dbReference>
<dbReference type="Bgee" id="FBgn0005427">
    <property type="expression patterns" value="Expressed in intestinal stem cell (Drosophila) in digestive tract and 277 other cell types or tissues"/>
</dbReference>
<dbReference type="ExpressionAtlas" id="Q24312">
    <property type="expression patterns" value="baseline and differential"/>
</dbReference>
<dbReference type="GO" id="GO:0005634">
    <property type="term" value="C:nucleus"/>
    <property type="evidence" value="ECO:0000314"/>
    <property type="project" value="UniProtKB"/>
</dbReference>
<dbReference type="GO" id="GO:0003677">
    <property type="term" value="F:DNA binding"/>
    <property type="evidence" value="ECO:0000303"/>
    <property type="project" value="UniProtKB"/>
</dbReference>
<dbReference type="GO" id="GO:0000981">
    <property type="term" value="F:DNA-binding transcription factor activity, RNA polymerase II-specific"/>
    <property type="evidence" value="ECO:0000318"/>
    <property type="project" value="GO_Central"/>
</dbReference>
<dbReference type="GO" id="GO:0000978">
    <property type="term" value="F:RNA polymerase II cis-regulatory region sequence-specific DNA binding"/>
    <property type="evidence" value="ECO:0000318"/>
    <property type="project" value="GO_Central"/>
</dbReference>
<dbReference type="GO" id="GO:0007527">
    <property type="term" value="P:adult somatic muscle development"/>
    <property type="evidence" value="ECO:0000316"/>
    <property type="project" value="FlyBase"/>
</dbReference>
<dbReference type="GO" id="GO:0007417">
    <property type="term" value="P:central nervous system development"/>
    <property type="evidence" value="ECO:0000315"/>
    <property type="project" value="UniProtKB"/>
</dbReference>
<dbReference type="GO" id="GO:0007560">
    <property type="term" value="P:imaginal disc morphogenesis"/>
    <property type="evidence" value="ECO:0000315"/>
    <property type="project" value="UniProtKB"/>
</dbReference>
<dbReference type="GO" id="GO:0007517">
    <property type="term" value="P:muscle organ development"/>
    <property type="evidence" value="ECO:0000315"/>
    <property type="project" value="UniProtKB"/>
</dbReference>
<dbReference type="GO" id="GO:0045886">
    <property type="term" value="P:negative regulation of synaptic assembly at neuromuscular junction"/>
    <property type="evidence" value="ECO:0000315"/>
    <property type="project" value="FlyBase"/>
</dbReference>
<dbReference type="GO" id="GO:0090263">
    <property type="term" value="P:positive regulation of canonical Wnt signaling pathway"/>
    <property type="evidence" value="ECO:0000316"/>
    <property type="project" value="FlyBase"/>
</dbReference>
<dbReference type="GO" id="GO:0006357">
    <property type="term" value="P:regulation of transcription by RNA polymerase II"/>
    <property type="evidence" value="ECO:0000315"/>
    <property type="project" value="FlyBase"/>
</dbReference>
<dbReference type="InterPro" id="IPR039142">
    <property type="entry name" value="NRF1/Ewg"/>
</dbReference>
<dbReference type="InterPro" id="IPR019525">
    <property type="entry name" value="Nrf1_NLS/DNA-bd_dimer"/>
</dbReference>
<dbReference type="PANTHER" id="PTHR20338">
    <property type="entry name" value="NUCLEAR RESPIRATORY FACTOR 1"/>
    <property type="match status" value="1"/>
</dbReference>
<dbReference type="Pfam" id="PF10491">
    <property type="entry name" value="Nrf1_DNA-bind"/>
    <property type="match status" value="1"/>
</dbReference>
<sequence>MATTSYRLVVAPAGSQRSSTGNVVVTTTSSGSHSSNGANGGTGGTSAGSSTLGSGLNVTTITATSGGQLQSAGNTSQSNGTTYKIEMLEEDIQSLGSDDDDEDLISSDGSLYEGDLGSMPVNDDVAHQLAAAGPVGVAAAAAIASSKKRKRPHCFETNPSVRKRQQNRLLRKLRAIIYEFTGRVGKQAVVLVATPGKPNTSYKVFGAKPLEDVLRNLKNIVMDELDNALAQQAPPPPQDDPSLFELPGLVIDGIPTPVEKMTQAQLRAFIPLMLKYSTGRGKPGWGRESTRPPWWPKELPWANVRMDARSEDDKQKISWTHALRKIVINCYKYHGREDLLPTFADDEDKVNALISQSGDEDEDMELSNPPTIHTVTTMTPPTGNSNQPQQVNVVKINSAGTVITTHTAQSNTPAPTIIQSTNNQHVTTTATLPASTKIEICQAPAQNQQHHQHHQTHLPNAVHIQPVAGGQPQTIQLTTASGTATATAVQTTAAAVSAAQAHAHSQSQAHSQSSANQTVTAQQIANAQVCIEPITLSDVDYTTQTVLSQNADGTVSLIQVDPNNPIITLPDGTTAQVQGVATLHQGEGGATIQTVQSLTDVNGHENMTVDLTETQDGQIYITTEDGQGYPVSVSNVISVPVSMYQSVMANVQQIQTNSDGTVCLAPMQVENGDQLETITMSPGMHQMMIQGGPGQEPQLVQVVSLKDATLLSKAMEAINSGNVKSEDTIIMEQ</sequence>
<accession>Q24312</accession>
<accession>A4V3R8</accession>
<accession>Q59E73</accession>
<accession>Q59E74</accession>
<accession>Q59E75</accession>
<accession>Q59E76</accession>
<accession>Q59E77</accession>
<accession>Q8SXJ1</accession>
<accession>Q9NF76</accession>
<accession>Q9W5G8</accession>
<accession>Q9W5G9</accession>
<keyword id="KW-0010">Activator</keyword>
<keyword id="KW-0025">Alternative splicing</keyword>
<keyword id="KW-0238">DNA-binding</keyword>
<keyword id="KW-0539">Nucleus</keyword>
<keyword id="KW-0597">Phosphoprotein</keyword>
<keyword id="KW-1185">Reference proteome</keyword>
<keyword id="KW-0804">Transcription</keyword>
<keyword id="KW-0805">Transcription regulation</keyword>
<evidence type="ECO:0000250" key="1"/>
<evidence type="ECO:0000250" key="2">
    <source>
        <dbReference type="UniProtKB" id="Q16656"/>
    </source>
</evidence>
<evidence type="ECO:0000256" key="3">
    <source>
        <dbReference type="SAM" id="MobiDB-lite"/>
    </source>
</evidence>
<evidence type="ECO:0000269" key="4">
    <source>
    </source>
</evidence>
<evidence type="ECO:0000269" key="5">
    <source>
    </source>
</evidence>
<evidence type="ECO:0000303" key="6">
    <source>
    </source>
</evidence>
<evidence type="ECO:0000303" key="7">
    <source>
    </source>
</evidence>
<evidence type="ECO:0000305" key="8"/>
<evidence type="ECO:0000312" key="9">
    <source>
        <dbReference type="EMBL" id="AAL90347.1"/>
    </source>
</evidence>
<organism evidence="9">
    <name type="scientific">Drosophila melanogaster</name>
    <name type="common">Fruit fly</name>
    <dbReference type="NCBI Taxonomy" id="7227"/>
    <lineage>
        <taxon>Eukaryota</taxon>
        <taxon>Metazoa</taxon>
        <taxon>Ecdysozoa</taxon>
        <taxon>Arthropoda</taxon>
        <taxon>Hexapoda</taxon>
        <taxon>Insecta</taxon>
        <taxon>Pterygota</taxon>
        <taxon>Neoptera</taxon>
        <taxon>Endopterygota</taxon>
        <taxon>Diptera</taxon>
        <taxon>Brachycera</taxon>
        <taxon>Muscomorpha</taxon>
        <taxon>Ephydroidea</taxon>
        <taxon>Drosophilidae</taxon>
        <taxon>Drosophila</taxon>
        <taxon>Sophophora</taxon>
    </lineage>
</organism>